<organism>
    <name type="scientific">Yersinia enterocolitica serotype O:8 / biotype 1B (strain NCTC 13174 / 8081)</name>
    <dbReference type="NCBI Taxonomy" id="393305"/>
    <lineage>
        <taxon>Bacteria</taxon>
        <taxon>Pseudomonadati</taxon>
        <taxon>Pseudomonadota</taxon>
        <taxon>Gammaproteobacteria</taxon>
        <taxon>Enterobacterales</taxon>
        <taxon>Yersiniaceae</taxon>
        <taxon>Yersinia</taxon>
    </lineage>
</organism>
<protein>
    <recommendedName>
        <fullName evidence="1">Endoribonuclease YbeY</fullName>
        <ecNumber evidence="1">3.1.-.-</ecNumber>
    </recommendedName>
</protein>
<sequence length="157" mass="17762">MSQVILDLQIACADSQGLPTEADFQHWLEAVLPQFQEVSEVTIRVVDEAESHELNLTYRGKDKPTNVLSFPFEAPPEIELPLLGDLIICRQVVEQEAVEQEKALLAHWAHMVVHGSLHLLGYDHIVDDEAEEMESIETEIMQSLGYPDPYISEKDPE</sequence>
<reference key="1">
    <citation type="journal article" date="2006" name="PLoS Genet.">
        <title>The complete genome sequence and comparative genome analysis of the high pathogenicity Yersinia enterocolitica strain 8081.</title>
        <authorList>
            <person name="Thomson N.R."/>
            <person name="Howard S."/>
            <person name="Wren B.W."/>
            <person name="Holden M.T.G."/>
            <person name="Crossman L."/>
            <person name="Challis G.L."/>
            <person name="Churcher C."/>
            <person name="Mungall K."/>
            <person name="Brooks K."/>
            <person name="Chillingworth T."/>
            <person name="Feltwell T."/>
            <person name="Abdellah Z."/>
            <person name="Hauser H."/>
            <person name="Jagels K."/>
            <person name="Maddison M."/>
            <person name="Moule S."/>
            <person name="Sanders M."/>
            <person name="Whitehead S."/>
            <person name="Quail M.A."/>
            <person name="Dougan G."/>
            <person name="Parkhill J."/>
            <person name="Prentice M.B."/>
        </authorList>
    </citation>
    <scope>NUCLEOTIDE SEQUENCE [LARGE SCALE GENOMIC DNA]</scope>
    <source>
        <strain>NCTC 13174 / 8081</strain>
    </source>
</reference>
<name>YBEY_YERE8</name>
<accession>A1JQ74</accession>
<evidence type="ECO:0000255" key="1">
    <source>
        <dbReference type="HAMAP-Rule" id="MF_00009"/>
    </source>
</evidence>
<proteinExistence type="inferred from homology"/>
<keyword id="KW-0963">Cytoplasm</keyword>
<keyword id="KW-0255">Endonuclease</keyword>
<keyword id="KW-0378">Hydrolase</keyword>
<keyword id="KW-0479">Metal-binding</keyword>
<keyword id="KW-0540">Nuclease</keyword>
<keyword id="KW-0690">Ribosome biogenesis</keyword>
<keyword id="KW-0698">rRNA processing</keyword>
<keyword id="KW-0862">Zinc</keyword>
<gene>
    <name evidence="1" type="primary">ybeY</name>
    <name type="ordered locus">YE2987</name>
</gene>
<dbReference type="EC" id="3.1.-.-" evidence="1"/>
<dbReference type="EMBL" id="AM286415">
    <property type="protein sequence ID" value="CAL13026.1"/>
    <property type="molecule type" value="Genomic_DNA"/>
</dbReference>
<dbReference type="RefSeq" id="WP_005158419.1">
    <property type="nucleotide sequence ID" value="NC_008800.1"/>
</dbReference>
<dbReference type="RefSeq" id="YP_001007176.1">
    <property type="nucleotide sequence ID" value="NC_008800.1"/>
</dbReference>
<dbReference type="SMR" id="A1JQ74"/>
<dbReference type="GeneID" id="31409949"/>
<dbReference type="KEGG" id="yen:YE2987"/>
<dbReference type="PATRIC" id="fig|393305.7.peg.3181"/>
<dbReference type="eggNOG" id="COG0319">
    <property type="taxonomic scope" value="Bacteria"/>
</dbReference>
<dbReference type="HOGENOM" id="CLU_106710_0_1_6"/>
<dbReference type="OrthoDB" id="9807740at2"/>
<dbReference type="PHI-base" id="PHI:7671"/>
<dbReference type="Proteomes" id="UP000000642">
    <property type="component" value="Chromosome"/>
</dbReference>
<dbReference type="GO" id="GO:0005737">
    <property type="term" value="C:cytoplasm"/>
    <property type="evidence" value="ECO:0007669"/>
    <property type="project" value="UniProtKB-SubCell"/>
</dbReference>
<dbReference type="GO" id="GO:0004222">
    <property type="term" value="F:metalloendopeptidase activity"/>
    <property type="evidence" value="ECO:0007669"/>
    <property type="project" value="InterPro"/>
</dbReference>
<dbReference type="GO" id="GO:0004521">
    <property type="term" value="F:RNA endonuclease activity"/>
    <property type="evidence" value="ECO:0007669"/>
    <property type="project" value="UniProtKB-UniRule"/>
</dbReference>
<dbReference type="GO" id="GO:0008270">
    <property type="term" value="F:zinc ion binding"/>
    <property type="evidence" value="ECO:0007669"/>
    <property type="project" value="UniProtKB-UniRule"/>
</dbReference>
<dbReference type="GO" id="GO:0006364">
    <property type="term" value="P:rRNA processing"/>
    <property type="evidence" value="ECO:0007669"/>
    <property type="project" value="UniProtKB-UniRule"/>
</dbReference>
<dbReference type="Gene3D" id="3.40.390.30">
    <property type="entry name" value="Metalloproteases ('zincins'), catalytic domain"/>
    <property type="match status" value="1"/>
</dbReference>
<dbReference type="HAMAP" id="MF_00009">
    <property type="entry name" value="Endoribonucl_YbeY"/>
    <property type="match status" value="1"/>
</dbReference>
<dbReference type="InterPro" id="IPR023091">
    <property type="entry name" value="MetalPrtase_cat_dom_sf_prd"/>
</dbReference>
<dbReference type="InterPro" id="IPR002036">
    <property type="entry name" value="YbeY"/>
</dbReference>
<dbReference type="InterPro" id="IPR020549">
    <property type="entry name" value="YbeY_CS"/>
</dbReference>
<dbReference type="NCBIfam" id="TIGR00043">
    <property type="entry name" value="rRNA maturation RNase YbeY"/>
    <property type="match status" value="1"/>
</dbReference>
<dbReference type="PANTHER" id="PTHR46986">
    <property type="entry name" value="ENDORIBONUCLEASE YBEY, CHLOROPLASTIC"/>
    <property type="match status" value="1"/>
</dbReference>
<dbReference type="PANTHER" id="PTHR46986:SF1">
    <property type="entry name" value="ENDORIBONUCLEASE YBEY, CHLOROPLASTIC"/>
    <property type="match status" value="1"/>
</dbReference>
<dbReference type="Pfam" id="PF02130">
    <property type="entry name" value="YbeY"/>
    <property type="match status" value="1"/>
</dbReference>
<dbReference type="SUPFAM" id="SSF55486">
    <property type="entry name" value="Metalloproteases ('zincins'), catalytic domain"/>
    <property type="match status" value="1"/>
</dbReference>
<dbReference type="PROSITE" id="PS01306">
    <property type="entry name" value="UPF0054"/>
    <property type="match status" value="1"/>
</dbReference>
<feature type="chain" id="PRO_0000284351" description="Endoribonuclease YbeY">
    <location>
        <begin position="1"/>
        <end position="157"/>
    </location>
</feature>
<feature type="binding site" evidence="1">
    <location>
        <position position="114"/>
    </location>
    <ligand>
        <name>Zn(2+)</name>
        <dbReference type="ChEBI" id="CHEBI:29105"/>
        <note>catalytic</note>
    </ligand>
</feature>
<feature type="binding site" evidence="1">
    <location>
        <position position="118"/>
    </location>
    <ligand>
        <name>Zn(2+)</name>
        <dbReference type="ChEBI" id="CHEBI:29105"/>
        <note>catalytic</note>
    </ligand>
</feature>
<feature type="binding site" evidence="1">
    <location>
        <position position="124"/>
    </location>
    <ligand>
        <name>Zn(2+)</name>
        <dbReference type="ChEBI" id="CHEBI:29105"/>
        <note>catalytic</note>
    </ligand>
</feature>
<comment type="function">
    <text evidence="1">Single strand-specific metallo-endoribonuclease involved in late-stage 70S ribosome quality control and in maturation of the 3' terminus of the 16S rRNA.</text>
</comment>
<comment type="cofactor">
    <cofactor evidence="1">
        <name>Zn(2+)</name>
        <dbReference type="ChEBI" id="CHEBI:29105"/>
    </cofactor>
    <text evidence="1">Binds 1 zinc ion.</text>
</comment>
<comment type="subcellular location">
    <subcellularLocation>
        <location evidence="1">Cytoplasm</location>
    </subcellularLocation>
</comment>
<comment type="similarity">
    <text evidence="1">Belongs to the endoribonuclease YbeY family.</text>
</comment>